<protein>
    <recommendedName>
        <fullName evidence="1">Chaperonin GroEL</fullName>
        <ecNumber evidence="1">5.6.1.7</ecNumber>
    </recommendedName>
    <alternativeName>
        <fullName evidence="1">60 kDa chaperonin</fullName>
    </alternativeName>
    <alternativeName>
        <fullName evidence="1">Chaperonin-60</fullName>
        <shortName evidence="1">Cpn60</shortName>
    </alternativeName>
</protein>
<dbReference type="EC" id="5.6.1.7" evidence="1"/>
<dbReference type="EMBL" id="CP000423">
    <property type="protein sequence ID" value="ABJ70983.1"/>
    <property type="molecule type" value="Genomic_DNA"/>
</dbReference>
<dbReference type="RefSeq" id="WP_003567042.1">
    <property type="nucleotide sequence ID" value="NC_008526.1"/>
</dbReference>
<dbReference type="RefSeq" id="YP_807425.1">
    <property type="nucleotide sequence ID" value="NC_008526.1"/>
</dbReference>
<dbReference type="SMR" id="Q035Y9"/>
<dbReference type="STRING" id="321967.LSEI_2238"/>
<dbReference type="PaxDb" id="321967-LSEI_2238"/>
<dbReference type="GeneID" id="57090849"/>
<dbReference type="KEGG" id="lca:LSEI_2238"/>
<dbReference type="PATRIC" id="fig|321967.11.peg.2200"/>
<dbReference type="HOGENOM" id="CLU_016503_3_0_9"/>
<dbReference type="Proteomes" id="UP000001651">
    <property type="component" value="Chromosome"/>
</dbReference>
<dbReference type="GO" id="GO:0005737">
    <property type="term" value="C:cytoplasm"/>
    <property type="evidence" value="ECO:0007669"/>
    <property type="project" value="UniProtKB-SubCell"/>
</dbReference>
<dbReference type="GO" id="GO:0005524">
    <property type="term" value="F:ATP binding"/>
    <property type="evidence" value="ECO:0007669"/>
    <property type="project" value="UniProtKB-UniRule"/>
</dbReference>
<dbReference type="GO" id="GO:0140662">
    <property type="term" value="F:ATP-dependent protein folding chaperone"/>
    <property type="evidence" value="ECO:0007669"/>
    <property type="project" value="InterPro"/>
</dbReference>
<dbReference type="GO" id="GO:0016853">
    <property type="term" value="F:isomerase activity"/>
    <property type="evidence" value="ECO:0007669"/>
    <property type="project" value="UniProtKB-KW"/>
</dbReference>
<dbReference type="GO" id="GO:0051082">
    <property type="term" value="F:unfolded protein binding"/>
    <property type="evidence" value="ECO:0007669"/>
    <property type="project" value="UniProtKB-UniRule"/>
</dbReference>
<dbReference type="GO" id="GO:0042026">
    <property type="term" value="P:protein refolding"/>
    <property type="evidence" value="ECO:0007669"/>
    <property type="project" value="UniProtKB-UniRule"/>
</dbReference>
<dbReference type="CDD" id="cd03344">
    <property type="entry name" value="GroEL"/>
    <property type="match status" value="1"/>
</dbReference>
<dbReference type="FunFam" id="1.10.560.10:FF:000001">
    <property type="entry name" value="60 kDa chaperonin"/>
    <property type="match status" value="1"/>
</dbReference>
<dbReference type="FunFam" id="3.50.7.10:FF:000001">
    <property type="entry name" value="60 kDa chaperonin"/>
    <property type="match status" value="1"/>
</dbReference>
<dbReference type="Gene3D" id="3.50.7.10">
    <property type="entry name" value="GroEL"/>
    <property type="match status" value="1"/>
</dbReference>
<dbReference type="Gene3D" id="1.10.560.10">
    <property type="entry name" value="GroEL-like equatorial domain"/>
    <property type="match status" value="1"/>
</dbReference>
<dbReference type="Gene3D" id="3.30.260.10">
    <property type="entry name" value="TCP-1-like chaperonin intermediate domain"/>
    <property type="match status" value="1"/>
</dbReference>
<dbReference type="HAMAP" id="MF_00600">
    <property type="entry name" value="CH60"/>
    <property type="match status" value="1"/>
</dbReference>
<dbReference type="InterPro" id="IPR018370">
    <property type="entry name" value="Chaperonin_Cpn60_CS"/>
</dbReference>
<dbReference type="InterPro" id="IPR001844">
    <property type="entry name" value="Cpn60/GroEL"/>
</dbReference>
<dbReference type="InterPro" id="IPR002423">
    <property type="entry name" value="Cpn60/GroEL/TCP-1"/>
</dbReference>
<dbReference type="InterPro" id="IPR027409">
    <property type="entry name" value="GroEL-like_apical_dom_sf"/>
</dbReference>
<dbReference type="InterPro" id="IPR027413">
    <property type="entry name" value="GROEL-like_equatorial_sf"/>
</dbReference>
<dbReference type="InterPro" id="IPR027410">
    <property type="entry name" value="TCP-1-like_intermed_sf"/>
</dbReference>
<dbReference type="NCBIfam" id="TIGR02348">
    <property type="entry name" value="GroEL"/>
    <property type="match status" value="1"/>
</dbReference>
<dbReference type="NCBIfam" id="NF000592">
    <property type="entry name" value="PRK00013.1"/>
    <property type="match status" value="1"/>
</dbReference>
<dbReference type="NCBIfam" id="NF009487">
    <property type="entry name" value="PRK12849.1"/>
    <property type="match status" value="1"/>
</dbReference>
<dbReference type="NCBIfam" id="NF009488">
    <property type="entry name" value="PRK12850.1"/>
    <property type="match status" value="1"/>
</dbReference>
<dbReference type="NCBIfam" id="NF009489">
    <property type="entry name" value="PRK12851.1"/>
    <property type="match status" value="1"/>
</dbReference>
<dbReference type="PANTHER" id="PTHR45633">
    <property type="entry name" value="60 KDA HEAT SHOCK PROTEIN, MITOCHONDRIAL"/>
    <property type="match status" value="1"/>
</dbReference>
<dbReference type="Pfam" id="PF00118">
    <property type="entry name" value="Cpn60_TCP1"/>
    <property type="match status" value="1"/>
</dbReference>
<dbReference type="PRINTS" id="PR00298">
    <property type="entry name" value="CHAPERONIN60"/>
</dbReference>
<dbReference type="SUPFAM" id="SSF52029">
    <property type="entry name" value="GroEL apical domain-like"/>
    <property type="match status" value="1"/>
</dbReference>
<dbReference type="SUPFAM" id="SSF48592">
    <property type="entry name" value="GroEL equatorial domain-like"/>
    <property type="match status" value="2"/>
</dbReference>
<dbReference type="PROSITE" id="PS00296">
    <property type="entry name" value="CHAPERONINS_CPN60"/>
    <property type="match status" value="1"/>
</dbReference>
<evidence type="ECO:0000255" key="1">
    <source>
        <dbReference type="HAMAP-Rule" id="MF_00600"/>
    </source>
</evidence>
<evidence type="ECO:0000256" key="2">
    <source>
        <dbReference type="SAM" id="MobiDB-lite"/>
    </source>
</evidence>
<proteinExistence type="inferred from homology"/>
<sequence length="544" mass="57428">MAKEIKFSEDARAAMLRGVDQLANTVKTTLGPKGRNVVLDKSYGSPEITNDGVTIAKSIDLEDHYENMGAKLVAEVASKTNDIAGDGTTTATVLAQSIIREGMKNVTAGANPVGIRTGIEKATKAAVDELHKISHKVNGKKEIAQVASVSSSNTEVGSLIADAMEKVGHDGVITIEESKGIDTELSVVEGMQFDRGYLSQYMVTDNDKMEADLDDPYILITDKKISNIQDILPLLQEIVQQGKALLIIADDVAGEALPTLVLNKIRGTFNVVAVKAPGFGDRRKAQLEDIATLTGGTVISSDLGLDLKDTKLEQLGRAGKVTVTKDNTTIVDGAGSKDAIAERVNIIKKQIDDTTSDFDREKLQERLAKLAGGVAVVKVGAATETELKERKYRIEDALNATRAAVEEGYVAGGGTALVDVLPAVAALKEEGDVQTGINIVLRALEEPVRQIAENAGKEGSVIVEQLKKEKQGVGYNAATDEWEDMAKSGIIDPTKVTRSALQNAASVAALMLTTEAVVADKPDPNANNNAAAGANPAAGMGGMM</sequence>
<gene>
    <name evidence="1" type="primary">groEL</name>
    <name evidence="1" type="synonym">groL</name>
    <name type="ordered locus">LSEI_2238</name>
</gene>
<reference key="1">
    <citation type="journal article" date="2006" name="Proc. Natl. Acad. Sci. U.S.A.">
        <title>Comparative genomics of the lactic acid bacteria.</title>
        <authorList>
            <person name="Makarova K.S."/>
            <person name="Slesarev A."/>
            <person name="Wolf Y.I."/>
            <person name="Sorokin A."/>
            <person name="Mirkin B."/>
            <person name="Koonin E.V."/>
            <person name="Pavlov A."/>
            <person name="Pavlova N."/>
            <person name="Karamychev V."/>
            <person name="Polouchine N."/>
            <person name="Shakhova V."/>
            <person name="Grigoriev I."/>
            <person name="Lou Y."/>
            <person name="Rohksar D."/>
            <person name="Lucas S."/>
            <person name="Huang K."/>
            <person name="Goodstein D.M."/>
            <person name="Hawkins T."/>
            <person name="Plengvidhya V."/>
            <person name="Welker D."/>
            <person name="Hughes J."/>
            <person name="Goh Y."/>
            <person name="Benson A."/>
            <person name="Baldwin K."/>
            <person name="Lee J.-H."/>
            <person name="Diaz-Muniz I."/>
            <person name="Dosti B."/>
            <person name="Smeianov V."/>
            <person name="Wechter W."/>
            <person name="Barabote R."/>
            <person name="Lorca G."/>
            <person name="Altermann E."/>
            <person name="Barrangou R."/>
            <person name="Ganesan B."/>
            <person name="Xie Y."/>
            <person name="Rawsthorne H."/>
            <person name="Tamir D."/>
            <person name="Parker C."/>
            <person name="Breidt F."/>
            <person name="Broadbent J.R."/>
            <person name="Hutkins R."/>
            <person name="O'Sullivan D."/>
            <person name="Steele J."/>
            <person name="Unlu G."/>
            <person name="Saier M.H. Jr."/>
            <person name="Klaenhammer T."/>
            <person name="Richardson P."/>
            <person name="Kozyavkin S."/>
            <person name="Weimer B.C."/>
            <person name="Mills D.A."/>
        </authorList>
    </citation>
    <scope>NUCLEOTIDE SEQUENCE [LARGE SCALE GENOMIC DNA]</scope>
    <source>
        <strain>ATCC 334 / BCRC 17002 / CCUG 31169 / CIP 107868 / KCTC 3260 / NRRL B-441</strain>
    </source>
</reference>
<organism>
    <name type="scientific">Lacticaseibacillus paracasei (strain ATCC 334 / BCRC 17002 / CCUG 31169 / CIP 107868 / KCTC 3260 / NRRL B-441)</name>
    <name type="common">Lactobacillus paracasei</name>
    <dbReference type="NCBI Taxonomy" id="321967"/>
    <lineage>
        <taxon>Bacteria</taxon>
        <taxon>Bacillati</taxon>
        <taxon>Bacillota</taxon>
        <taxon>Bacilli</taxon>
        <taxon>Lactobacillales</taxon>
        <taxon>Lactobacillaceae</taxon>
        <taxon>Lacticaseibacillus</taxon>
    </lineage>
</organism>
<keyword id="KW-0067">ATP-binding</keyword>
<keyword id="KW-0143">Chaperone</keyword>
<keyword id="KW-0963">Cytoplasm</keyword>
<keyword id="KW-0413">Isomerase</keyword>
<keyword id="KW-0547">Nucleotide-binding</keyword>
<keyword id="KW-1185">Reference proteome</keyword>
<accession>Q035Y9</accession>
<comment type="function">
    <text evidence="1">Together with its co-chaperonin GroES, plays an essential role in assisting protein folding. The GroEL-GroES system forms a nano-cage that allows encapsulation of the non-native substrate proteins and provides a physical environment optimized to promote and accelerate protein folding.</text>
</comment>
<comment type="catalytic activity">
    <reaction evidence="1">
        <text>ATP + H2O + a folded polypeptide = ADP + phosphate + an unfolded polypeptide.</text>
        <dbReference type="EC" id="5.6.1.7"/>
    </reaction>
</comment>
<comment type="subunit">
    <text evidence="1">Forms a cylinder of 14 subunits composed of two heptameric rings stacked back-to-back. Interacts with the co-chaperonin GroES.</text>
</comment>
<comment type="subcellular location">
    <subcellularLocation>
        <location evidence="1">Cytoplasm</location>
    </subcellularLocation>
</comment>
<comment type="similarity">
    <text evidence="1">Belongs to the chaperonin (HSP60) family.</text>
</comment>
<name>CH60_LACP3</name>
<feature type="chain" id="PRO_1000025798" description="Chaperonin GroEL">
    <location>
        <begin position="1"/>
        <end position="544"/>
    </location>
</feature>
<feature type="region of interest" description="Disordered" evidence="2">
    <location>
        <begin position="522"/>
        <end position="544"/>
    </location>
</feature>
<feature type="compositionally biased region" description="Low complexity" evidence="2">
    <location>
        <begin position="524"/>
        <end position="538"/>
    </location>
</feature>
<feature type="binding site" evidence="1">
    <location>
        <begin position="29"/>
        <end position="32"/>
    </location>
    <ligand>
        <name>ATP</name>
        <dbReference type="ChEBI" id="CHEBI:30616"/>
    </ligand>
</feature>
<feature type="binding site" evidence="1">
    <location>
        <begin position="86"/>
        <end position="90"/>
    </location>
    <ligand>
        <name>ATP</name>
        <dbReference type="ChEBI" id="CHEBI:30616"/>
    </ligand>
</feature>
<feature type="binding site" evidence="1">
    <location>
        <position position="413"/>
    </location>
    <ligand>
        <name>ATP</name>
        <dbReference type="ChEBI" id="CHEBI:30616"/>
    </ligand>
</feature>
<feature type="binding site" evidence="1">
    <location>
        <begin position="476"/>
        <end position="478"/>
    </location>
    <ligand>
        <name>ATP</name>
        <dbReference type="ChEBI" id="CHEBI:30616"/>
    </ligand>
</feature>
<feature type="binding site" evidence="1">
    <location>
        <position position="492"/>
    </location>
    <ligand>
        <name>ATP</name>
        <dbReference type="ChEBI" id="CHEBI:30616"/>
    </ligand>
</feature>